<accession>Q9EPR4</accession>
<accession>Q80Y23</accession>
<accession>Q8C327</accession>
<accession>Q9JM78</accession>
<reference key="1">
    <citation type="journal article" date="2000" name="DNA Res.">
        <title>Cloning and genomic organization of the mouse gene slc23a1 encoding a vitamin C transporter.</title>
        <authorList>
            <person name="Gispert S."/>
            <person name="Dutra A."/>
            <person name="Lieberman A."/>
            <person name="Friedlich D."/>
            <person name="Nussbaum R.L."/>
        </authorList>
    </citation>
    <scope>NUCLEOTIDE SEQUENCE [MRNA] (ISOFORM 1)</scope>
    <source>
        <strain>129/SvEv</strain>
        <tissue>Brain</tissue>
    </source>
</reference>
<reference key="2">
    <citation type="journal article" date="2005" name="Science">
        <title>The transcriptional landscape of the mammalian genome.</title>
        <authorList>
            <person name="Carninci P."/>
            <person name="Kasukawa T."/>
            <person name="Katayama S."/>
            <person name="Gough J."/>
            <person name="Frith M.C."/>
            <person name="Maeda N."/>
            <person name="Oyama R."/>
            <person name="Ravasi T."/>
            <person name="Lenhard B."/>
            <person name="Wells C."/>
            <person name="Kodzius R."/>
            <person name="Shimokawa K."/>
            <person name="Bajic V.B."/>
            <person name="Brenner S.E."/>
            <person name="Batalov S."/>
            <person name="Forrest A.R."/>
            <person name="Zavolan M."/>
            <person name="Davis M.J."/>
            <person name="Wilming L.G."/>
            <person name="Aidinis V."/>
            <person name="Allen J.E."/>
            <person name="Ambesi-Impiombato A."/>
            <person name="Apweiler R."/>
            <person name="Aturaliya R.N."/>
            <person name="Bailey T.L."/>
            <person name="Bansal M."/>
            <person name="Baxter L."/>
            <person name="Beisel K.W."/>
            <person name="Bersano T."/>
            <person name="Bono H."/>
            <person name="Chalk A.M."/>
            <person name="Chiu K.P."/>
            <person name="Choudhary V."/>
            <person name="Christoffels A."/>
            <person name="Clutterbuck D.R."/>
            <person name="Crowe M.L."/>
            <person name="Dalla E."/>
            <person name="Dalrymple B.P."/>
            <person name="de Bono B."/>
            <person name="Della Gatta G."/>
            <person name="di Bernardo D."/>
            <person name="Down T."/>
            <person name="Engstrom P."/>
            <person name="Fagiolini M."/>
            <person name="Faulkner G."/>
            <person name="Fletcher C.F."/>
            <person name="Fukushima T."/>
            <person name="Furuno M."/>
            <person name="Futaki S."/>
            <person name="Gariboldi M."/>
            <person name="Georgii-Hemming P."/>
            <person name="Gingeras T.R."/>
            <person name="Gojobori T."/>
            <person name="Green R.E."/>
            <person name="Gustincich S."/>
            <person name="Harbers M."/>
            <person name="Hayashi Y."/>
            <person name="Hensch T.K."/>
            <person name="Hirokawa N."/>
            <person name="Hill D."/>
            <person name="Huminiecki L."/>
            <person name="Iacono M."/>
            <person name="Ikeo K."/>
            <person name="Iwama A."/>
            <person name="Ishikawa T."/>
            <person name="Jakt M."/>
            <person name="Kanapin A."/>
            <person name="Katoh M."/>
            <person name="Kawasawa Y."/>
            <person name="Kelso J."/>
            <person name="Kitamura H."/>
            <person name="Kitano H."/>
            <person name="Kollias G."/>
            <person name="Krishnan S.P."/>
            <person name="Kruger A."/>
            <person name="Kummerfeld S.K."/>
            <person name="Kurochkin I.V."/>
            <person name="Lareau L.F."/>
            <person name="Lazarevic D."/>
            <person name="Lipovich L."/>
            <person name="Liu J."/>
            <person name="Liuni S."/>
            <person name="McWilliam S."/>
            <person name="Madan Babu M."/>
            <person name="Madera M."/>
            <person name="Marchionni L."/>
            <person name="Matsuda H."/>
            <person name="Matsuzawa S."/>
            <person name="Miki H."/>
            <person name="Mignone F."/>
            <person name="Miyake S."/>
            <person name="Morris K."/>
            <person name="Mottagui-Tabar S."/>
            <person name="Mulder N."/>
            <person name="Nakano N."/>
            <person name="Nakauchi H."/>
            <person name="Ng P."/>
            <person name="Nilsson R."/>
            <person name="Nishiguchi S."/>
            <person name="Nishikawa S."/>
            <person name="Nori F."/>
            <person name="Ohara O."/>
            <person name="Okazaki Y."/>
            <person name="Orlando V."/>
            <person name="Pang K.C."/>
            <person name="Pavan W.J."/>
            <person name="Pavesi G."/>
            <person name="Pesole G."/>
            <person name="Petrovsky N."/>
            <person name="Piazza S."/>
            <person name="Reed J."/>
            <person name="Reid J.F."/>
            <person name="Ring B.Z."/>
            <person name="Ringwald M."/>
            <person name="Rost B."/>
            <person name="Ruan Y."/>
            <person name="Salzberg S.L."/>
            <person name="Sandelin A."/>
            <person name="Schneider C."/>
            <person name="Schoenbach C."/>
            <person name="Sekiguchi K."/>
            <person name="Semple C.A."/>
            <person name="Seno S."/>
            <person name="Sessa L."/>
            <person name="Sheng Y."/>
            <person name="Shibata Y."/>
            <person name="Shimada H."/>
            <person name="Shimada K."/>
            <person name="Silva D."/>
            <person name="Sinclair B."/>
            <person name="Sperling S."/>
            <person name="Stupka E."/>
            <person name="Sugiura K."/>
            <person name="Sultana R."/>
            <person name="Takenaka Y."/>
            <person name="Taki K."/>
            <person name="Tammoja K."/>
            <person name="Tan S.L."/>
            <person name="Tang S."/>
            <person name="Taylor M.S."/>
            <person name="Tegner J."/>
            <person name="Teichmann S.A."/>
            <person name="Ueda H.R."/>
            <person name="van Nimwegen E."/>
            <person name="Verardo R."/>
            <person name="Wei C.L."/>
            <person name="Yagi K."/>
            <person name="Yamanishi H."/>
            <person name="Zabarovsky E."/>
            <person name="Zhu S."/>
            <person name="Zimmer A."/>
            <person name="Hide W."/>
            <person name="Bult C."/>
            <person name="Grimmond S.M."/>
            <person name="Teasdale R.D."/>
            <person name="Liu E.T."/>
            <person name="Brusic V."/>
            <person name="Quackenbush J."/>
            <person name="Wahlestedt C."/>
            <person name="Mattick J.S."/>
            <person name="Hume D.A."/>
            <person name="Kai C."/>
            <person name="Sasaki D."/>
            <person name="Tomaru Y."/>
            <person name="Fukuda S."/>
            <person name="Kanamori-Katayama M."/>
            <person name="Suzuki M."/>
            <person name="Aoki J."/>
            <person name="Arakawa T."/>
            <person name="Iida J."/>
            <person name="Imamura K."/>
            <person name="Itoh M."/>
            <person name="Kato T."/>
            <person name="Kawaji H."/>
            <person name="Kawagashira N."/>
            <person name="Kawashima T."/>
            <person name="Kojima M."/>
            <person name="Kondo S."/>
            <person name="Konno H."/>
            <person name="Nakano K."/>
            <person name="Ninomiya N."/>
            <person name="Nishio T."/>
            <person name="Okada M."/>
            <person name="Plessy C."/>
            <person name="Shibata K."/>
            <person name="Shiraki T."/>
            <person name="Suzuki S."/>
            <person name="Tagami M."/>
            <person name="Waki K."/>
            <person name="Watahiki A."/>
            <person name="Okamura-Oho Y."/>
            <person name="Suzuki H."/>
            <person name="Kawai J."/>
            <person name="Hayashizaki Y."/>
        </authorList>
    </citation>
    <scope>NUCLEOTIDE SEQUENCE [LARGE SCALE MRNA] (ISOFORM 2)</scope>
    <source>
        <strain>C57BL/6J</strain>
        <tissue>Lung</tissue>
    </source>
</reference>
<reference key="3">
    <citation type="journal article" date="2009" name="PLoS Biol.">
        <title>Lineage-specific biology revealed by a finished genome assembly of the mouse.</title>
        <authorList>
            <person name="Church D.M."/>
            <person name="Goodstadt L."/>
            <person name="Hillier L.W."/>
            <person name="Zody M.C."/>
            <person name="Goldstein S."/>
            <person name="She X."/>
            <person name="Bult C.J."/>
            <person name="Agarwala R."/>
            <person name="Cherry J.L."/>
            <person name="DiCuccio M."/>
            <person name="Hlavina W."/>
            <person name="Kapustin Y."/>
            <person name="Meric P."/>
            <person name="Maglott D."/>
            <person name="Birtle Z."/>
            <person name="Marques A.C."/>
            <person name="Graves T."/>
            <person name="Zhou S."/>
            <person name="Teague B."/>
            <person name="Potamousis K."/>
            <person name="Churas C."/>
            <person name="Place M."/>
            <person name="Herschleb J."/>
            <person name="Runnheim R."/>
            <person name="Forrest D."/>
            <person name="Amos-Landgraf J."/>
            <person name="Schwartz D.C."/>
            <person name="Cheng Z."/>
            <person name="Lindblad-Toh K."/>
            <person name="Eichler E.E."/>
            <person name="Ponting C.P."/>
        </authorList>
    </citation>
    <scope>NUCLEOTIDE SEQUENCE [LARGE SCALE GENOMIC DNA]</scope>
    <source>
        <strain>C57BL/6J</strain>
    </source>
</reference>
<reference key="4">
    <citation type="submission" date="2005-07" db="EMBL/GenBank/DDBJ databases">
        <authorList>
            <person name="Mural R.J."/>
            <person name="Adams M.D."/>
            <person name="Myers E.W."/>
            <person name="Smith H.O."/>
            <person name="Venter J.C."/>
        </authorList>
    </citation>
    <scope>NUCLEOTIDE SEQUENCE [LARGE SCALE GENOMIC DNA]</scope>
</reference>
<reference key="5">
    <citation type="journal article" date="2004" name="Genome Res.">
        <title>The status, quality, and expansion of the NIH full-length cDNA project: the Mammalian Gene Collection (MGC).</title>
        <authorList>
            <consortium name="The MGC Project Team"/>
        </authorList>
    </citation>
    <scope>NUCLEOTIDE SEQUENCE [LARGE SCALE MRNA] (ISOFORM 1)</scope>
    <source>
        <tissue>Embryo</tissue>
    </source>
</reference>
<reference key="6">
    <citation type="submission" date="2000-02" db="EMBL/GenBank/DDBJ databases">
        <title>Mouse sodium dependent vitamin C transporter 2 (mSVCT2).</title>
        <authorList>
            <person name="Fujita I."/>
            <person name="Hirano J."/>
            <person name="Tanaka K."/>
        </authorList>
    </citation>
    <scope>NUCLEOTIDE SEQUENCE [MRNA] OF 8-647 (ISOFORM 1)</scope>
    <source>
        <tissue>Brain</tissue>
    </source>
</reference>
<reference key="7">
    <citation type="journal article" date="2003" name="DNA Res.">
        <title>Prediction of the coding sequences of mouse homologues of KIAA gene: II. The complete nucleotide sequences of 400 mouse KIAA-homologous cDNAs identified by screening of terminal sequences of cDNA clones randomly sampled from size-fractionated libraries.</title>
        <authorList>
            <person name="Okazaki N."/>
            <person name="Kikuno R."/>
            <person name="Ohara R."/>
            <person name="Inamoto S."/>
            <person name="Aizawa H."/>
            <person name="Yuasa S."/>
            <person name="Nakajima D."/>
            <person name="Nagase T."/>
            <person name="Ohara O."/>
            <person name="Koga H."/>
        </authorList>
    </citation>
    <scope>NUCLEOTIDE SEQUENCE [LARGE SCALE MRNA] OF 108-648 (ISOFORM 1)</scope>
    <source>
        <tissue>Brain</tissue>
    </source>
</reference>
<reference key="8">
    <citation type="journal article" date="2007" name="Biochem. Pharmacol.">
        <title>Upregulation of sodium-dependent vitamin C transporter 2 expression in adrenals increases norepinephrine production and aggravates hyperlipidemia in mice with streptozotocin-induced diabetes.</title>
        <authorList>
            <person name="Wu X."/>
            <person name="Iguchi T."/>
            <person name="Hirano J."/>
            <person name="Fujita I."/>
            <person name="Ueda H."/>
            <person name="Itoh N."/>
            <person name="Tanaka K."/>
            <person name="Nakanishi T."/>
        </authorList>
    </citation>
    <scope>TISSUE SPECIFICITY</scope>
    <scope>DISEASE</scope>
</reference>
<reference key="9">
    <citation type="journal article" date="2009" name="Immunity">
        <title>The phagosomal proteome in interferon-gamma-activated macrophages.</title>
        <authorList>
            <person name="Trost M."/>
            <person name="English L."/>
            <person name="Lemieux S."/>
            <person name="Courcelles M."/>
            <person name="Desjardins M."/>
            <person name="Thibault P."/>
        </authorList>
    </citation>
    <scope>PHOSPHORYLATION [LARGE SCALE ANALYSIS] AT SER-70; SER-78; THR-79; SER-81 AND THR-647</scope>
    <scope>IDENTIFICATION BY MASS SPECTROMETRY [LARGE SCALE ANALYSIS]</scope>
</reference>
<reference key="10">
    <citation type="journal article" date="2010" name="Cell">
        <title>A tissue-specific atlas of mouse protein phosphorylation and expression.</title>
        <authorList>
            <person name="Huttlin E.L."/>
            <person name="Jedrychowski M.P."/>
            <person name="Elias J.E."/>
            <person name="Goswami T."/>
            <person name="Rad R."/>
            <person name="Beausoleil S.A."/>
            <person name="Villen J."/>
            <person name="Haas W."/>
            <person name="Sowa M.E."/>
            <person name="Gygi S.P."/>
        </authorList>
    </citation>
    <scope>PHOSPHORYLATION [LARGE SCALE ANALYSIS] AT SER-81</scope>
    <scope>IDENTIFICATION BY MASS SPECTROMETRY [LARGE SCALE ANALYSIS]</scope>
    <source>
        <tissue>Brain</tissue>
        <tissue>Heart</tissue>
        <tissue>Lung</tissue>
    </source>
</reference>
<comment type="function">
    <text evidence="1">Sodium/ascorbate cotransporter. Mediates electrogenic uptake of vitamin C, with a stoichiometry of 2 Na(+) for each ascorbate.</text>
</comment>
<comment type="catalytic activity">
    <reaction evidence="1">
        <text>L-ascorbate(out) + 2 Na(+)(out) = L-ascorbate(in) + 2 Na(+)(in)</text>
        <dbReference type="Rhea" id="RHEA:69883"/>
        <dbReference type="ChEBI" id="CHEBI:29101"/>
        <dbReference type="ChEBI" id="CHEBI:38290"/>
    </reaction>
</comment>
<comment type="subunit">
    <text evidence="1">Interacts with CLSTN3.</text>
</comment>
<comment type="subcellular location">
    <subcellularLocation>
        <location evidence="1">Cell membrane</location>
        <topology evidence="1">Multi-pass membrane protein</topology>
    </subcellularLocation>
</comment>
<comment type="alternative products">
    <event type="alternative splicing"/>
    <isoform>
        <id>Q9EPR4-1</id>
        <name>1</name>
        <sequence type="displayed"/>
    </isoform>
    <isoform>
        <id>Q9EPR4-2</id>
        <name>2</name>
        <sequence type="described" ref="VSP_007367 VSP_007368"/>
    </isoform>
</comment>
<comment type="tissue specificity">
    <text evidence="5">Expressed in metabolically active and specialized tissues, including high expression in brain and adrenals. Detected in a wide range of tissues. Expression in kidney is almost undetectable.</text>
</comment>
<comment type="PTM">
    <text evidence="1">Phosphorylated.</text>
</comment>
<comment type="disease">
    <text evidence="5">Elevated expression levels in the adrenals of diabetic mice.</text>
</comment>
<comment type="similarity">
    <text evidence="8">Belongs to the nucleobase:cation symporter-2 (NCS2) (TC 2.A.40) family.</text>
</comment>
<comment type="sequence caution" evidence="8">
    <conflict type="erroneous initiation">
        <sequence resource="EMBL-CDS" id="AAG02252"/>
    </conflict>
</comment>
<comment type="sequence caution" evidence="8">
    <conflict type="erroneous initiation">
        <sequence resource="EMBL-CDS" id="BAA90751"/>
    </conflict>
</comment>
<comment type="sequence caution" evidence="8">
    <conflict type="erroneous gene model prediction">
        <sequence resource="EMBL-CDS" id="BAC65509"/>
    </conflict>
</comment>
<organism>
    <name type="scientific">Mus musculus</name>
    <name type="common">Mouse</name>
    <dbReference type="NCBI Taxonomy" id="10090"/>
    <lineage>
        <taxon>Eukaryota</taxon>
        <taxon>Metazoa</taxon>
        <taxon>Chordata</taxon>
        <taxon>Craniata</taxon>
        <taxon>Vertebrata</taxon>
        <taxon>Euteleostomi</taxon>
        <taxon>Mammalia</taxon>
        <taxon>Eutheria</taxon>
        <taxon>Euarchontoglires</taxon>
        <taxon>Glires</taxon>
        <taxon>Rodentia</taxon>
        <taxon>Myomorpha</taxon>
        <taxon>Muroidea</taxon>
        <taxon>Muridae</taxon>
        <taxon>Murinae</taxon>
        <taxon>Mus</taxon>
        <taxon>Mus</taxon>
    </lineage>
</organism>
<evidence type="ECO:0000250" key="1">
    <source>
        <dbReference type="UniProtKB" id="Q9UGH3"/>
    </source>
</evidence>
<evidence type="ECO:0000250" key="2">
    <source>
        <dbReference type="UniProtKB" id="Q9WTW8"/>
    </source>
</evidence>
<evidence type="ECO:0000255" key="3"/>
<evidence type="ECO:0000256" key="4">
    <source>
        <dbReference type="SAM" id="MobiDB-lite"/>
    </source>
</evidence>
<evidence type="ECO:0000269" key="5">
    <source>
    </source>
</evidence>
<evidence type="ECO:0000303" key="6">
    <source>
    </source>
</evidence>
<evidence type="ECO:0000303" key="7">
    <source>
    </source>
</evidence>
<evidence type="ECO:0000305" key="8"/>
<evidence type="ECO:0007744" key="9">
    <source>
    </source>
</evidence>
<evidence type="ECO:0007744" key="10">
    <source>
    </source>
</evidence>
<dbReference type="EMBL" id="AY004874">
    <property type="protein sequence ID" value="AAG02252.1"/>
    <property type="status" value="ALT_INIT"/>
    <property type="molecule type" value="mRNA"/>
</dbReference>
<dbReference type="EMBL" id="AK087175">
    <property type="protein sequence ID" value="BAC39819.1"/>
    <property type="molecule type" value="mRNA"/>
</dbReference>
<dbReference type="EMBL" id="AL831706">
    <property type="status" value="NOT_ANNOTATED_CDS"/>
    <property type="molecule type" value="Genomic_DNA"/>
</dbReference>
<dbReference type="EMBL" id="CH466519">
    <property type="protein sequence ID" value="EDL28341.1"/>
    <property type="molecule type" value="Genomic_DNA"/>
</dbReference>
<dbReference type="EMBL" id="BC050823">
    <property type="protein sequence ID" value="AAH50823.1"/>
    <property type="molecule type" value="mRNA"/>
</dbReference>
<dbReference type="EMBL" id="AB038145">
    <property type="protein sequence ID" value="BAA90751.1"/>
    <property type="status" value="ALT_INIT"/>
    <property type="molecule type" value="mRNA"/>
</dbReference>
<dbReference type="EMBL" id="AK122227">
    <property type="protein sequence ID" value="BAC65509.1"/>
    <property type="status" value="ALT_SEQ"/>
    <property type="molecule type" value="Transcribed_RNA"/>
</dbReference>
<dbReference type="CCDS" id="CCDS16769.1">
    <molecule id="Q9EPR4-1"/>
</dbReference>
<dbReference type="RefSeq" id="NP_001342359.1">
    <molecule id="Q9EPR4-1"/>
    <property type="nucleotide sequence ID" value="NM_001355430.2"/>
</dbReference>
<dbReference type="RefSeq" id="NP_001342360.1">
    <molecule id="Q9EPR4-2"/>
    <property type="nucleotide sequence ID" value="NM_001355431.2"/>
</dbReference>
<dbReference type="RefSeq" id="NP_001408432.1">
    <molecule id="Q9EPR4-1"/>
    <property type="nucleotide sequence ID" value="NM_001421503.1"/>
</dbReference>
<dbReference type="RefSeq" id="NP_061294.2">
    <molecule id="Q9EPR4-1"/>
    <property type="nucleotide sequence ID" value="NM_018824.2"/>
</dbReference>
<dbReference type="RefSeq" id="XP_006499969.1">
    <property type="nucleotide sequence ID" value="XM_006499906.3"/>
</dbReference>
<dbReference type="RefSeq" id="XP_006499970.1">
    <molecule id="Q9EPR4-1"/>
    <property type="nucleotide sequence ID" value="XM_006499907.5"/>
</dbReference>
<dbReference type="RefSeq" id="XP_011238000.1">
    <molecule id="Q9EPR4-1"/>
    <property type="nucleotide sequence ID" value="XM_011239698.4"/>
</dbReference>
<dbReference type="RefSeq" id="XP_017174620.1">
    <property type="nucleotide sequence ID" value="XM_017319131.1"/>
</dbReference>
<dbReference type="RefSeq" id="XP_030107742.1">
    <molecule id="Q9EPR4-1"/>
    <property type="nucleotide sequence ID" value="XM_030251882.2"/>
</dbReference>
<dbReference type="SMR" id="Q9EPR4"/>
<dbReference type="BioGRID" id="207613">
    <property type="interactions" value="2"/>
</dbReference>
<dbReference type="FunCoup" id="Q9EPR4">
    <property type="interactions" value="479"/>
</dbReference>
<dbReference type="STRING" id="10090.ENSMUSP00000028815"/>
<dbReference type="GlyCosmos" id="Q9EPR4">
    <property type="glycosylation" value="2 sites, No reported glycans"/>
</dbReference>
<dbReference type="GlyGen" id="Q9EPR4">
    <property type="glycosylation" value="3 sites, 2 N-linked glycans (2 sites)"/>
</dbReference>
<dbReference type="iPTMnet" id="Q9EPR4"/>
<dbReference type="PhosphoSitePlus" id="Q9EPR4"/>
<dbReference type="SwissPalm" id="Q9EPR4"/>
<dbReference type="jPOST" id="Q9EPR4"/>
<dbReference type="PaxDb" id="10090-ENSMUSP00000028815"/>
<dbReference type="PeptideAtlas" id="Q9EPR4"/>
<dbReference type="ProteomicsDB" id="253366">
    <molecule id="Q9EPR4-1"/>
</dbReference>
<dbReference type="ProteomicsDB" id="253367">
    <molecule id="Q9EPR4-2"/>
</dbReference>
<dbReference type="Pumba" id="Q9EPR4"/>
<dbReference type="Antibodypedia" id="42663">
    <property type="antibodies" value="127 antibodies from 23 providers"/>
</dbReference>
<dbReference type="DNASU" id="54338"/>
<dbReference type="Ensembl" id="ENSMUST00000028815.15">
    <molecule id="Q9EPR4-1"/>
    <property type="protein sequence ID" value="ENSMUSP00000028815.9"/>
    <property type="gene ID" value="ENSMUSG00000027340.16"/>
</dbReference>
<dbReference type="GeneID" id="54338"/>
<dbReference type="KEGG" id="mmu:54338"/>
<dbReference type="UCSC" id="uc008mmi.1">
    <molecule id="Q9EPR4-1"/>
    <property type="organism name" value="mouse"/>
</dbReference>
<dbReference type="UCSC" id="uc008mmj.1">
    <molecule id="Q9EPR4-2"/>
    <property type="organism name" value="mouse"/>
</dbReference>
<dbReference type="AGR" id="MGI:1859682"/>
<dbReference type="CTD" id="9962"/>
<dbReference type="MGI" id="MGI:1859682">
    <property type="gene designation" value="Slc23a2"/>
</dbReference>
<dbReference type="VEuPathDB" id="HostDB:ENSMUSG00000027340"/>
<dbReference type="eggNOG" id="KOG1292">
    <property type="taxonomic scope" value="Eukaryota"/>
</dbReference>
<dbReference type="GeneTree" id="ENSGT00950000182953"/>
<dbReference type="HOGENOM" id="CLU_017959_5_4_1"/>
<dbReference type="InParanoid" id="Q9EPR4"/>
<dbReference type="OMA" id="MVVSMTE"/>
<dbReference type="OrthoDB" id="1641903at2759"/>
<dbReference type="PhylomeDB" id="Q9EPR4"/>
<dbReference type="TreeFam" id="TF313272"/>
<dbReference type="Reactome" id="R-MMU-196836">
    <property type="pathway name" value="Vitamin C (ascorbate) metabolism"/>
</dbReference>
<dbReference type="BioGRID-ORCS" id="54338">
    <property type="hits" value="2 hits in 79 CRISPR screens"/>
</dbReference>
<dbReference type="ChiTaRS" id="Slc23a2">
    <property type="organism name" value="mouse"/>
</dbReference>
<dbReference type="PRO" id="PR:Q9EPR4"/>
<dbReference type="Proteomes" id="UP000000589">
    <property type="component" value="Chromosome 2"/>
</dbReference>
<dbReference type="RNAct" id="Q9EPR4">
    <property type="molecule type" value="protein"/>
</dbReference>
<dbReference type="Bgee" id="ENSMUSG00000027340">
    <property type="expression patterns" value="Expressed in choroid plexus of fourth ventricle and 236 other cell types or tissues"/>
</dbReference>
<dbReference type="ExpressionAtlas" id="Q9EPR4">
    <property type="expression patterns" value="baseline and differential"/>
</dbReference>
<dbReference type="GO" id="GO:0016324">
    <property type="term" value="C:apical plasma membrane"/>
    <property type="evidence" value="ECO:0007669"/>
    <property type="project" value="Ensembl"/>
</dbReference>
<dbReference type="GO" id="GO:0009925">
    <property type="term" value="C:basal plasma membrane"/>
    <property type="evidence" value="ECO:0000314"/>
    <property type="project" value="UniProtKB"/>
</dbReference>
<dbReference type="GO" id="GO:0016323">
    <property type="term" value="C:basolateral plasma membrane"/>
    <property type="evidence" value="ECO:0007669"/>
    <property type="project" value="Ensembl"/>
</dbReference>
<dbReference type="GO" id="GO:0005737">
    <property type="term" value="C:cytoplasm"/>
    <property type="evidence" value="ECO:0000314"/>
    <property type="project" value="UniProtKB"/>
</dbReference>
<dbReference type="GO" id="GO:0008520">
    <property type="term" value="F:L-ascorbate:sodium symporter activity"/>
    <property type="evidence" value="ECO:0000315"/>
    <property type="project" value="MGI"/>
</dbReference>
<dbReference type="GO" id="GO:0015229">
    <property type="term" value="F:L-ascorbic acid transmembrane transporter activity"/>
    <property type="evidence" value="ECO:0000314"/>
    <property type="project" value="UniProtKB"/>
</dbReference>
<dbReference type="GO" id="GO:0008015">
    <property type="term" value="P:blood circulation"/>
    <property type="evidence" value="ECO:0000315"/>
    <property type="project" value="MGI"/>
</dbReference>
<dbReference type="GO" id="GO:0007155">
    <property type="term" value="P:cell adhesion"/>
    <property type="evidence" value="ECO:0007669"/>
    <property type="project" value="UniProtKB-KW"/>
</dbReference>
<dbReference type="GO" id="GO:0071361">
    <property type="term" value="P:cellular response to ethanol"/>
    <property type="evidence" value="ECO:0007669"/>
    <property type="project" value="Ensembl"/>
</dbReference>
<dbReference type="GO" id="GO:0019852">
    <property type="term" value="P:L-ascorbic acid metabolic process"/>
    <property type="evidence" value="ECO:0007669"/>
    <property type="project" value="Ensembl"/>
</dbReference>
<dbReference type="GO" id="GO:0015882">
    <property type="term" value="P:L-ascorbic acid transmembrane transport"/>
    <property type="evidence" value="ECO:0000314"/>
    <property type="project" value="UniProtKB"/>
</dbReference>
<dbReference type="GO" id="GO:1903861">
    <property type="term" value="P:positive regulation of dendrite extension"/>
    <property type="evidence" value="ECO:0007669"/>
    <property type="project" value="Ensembl"/>
</dbReference>
<dbReference type="GO" id="GO:0006979">
    <property type="term" value="P:response to oxidative stress"/>
    <property type="evidence" value="ECO:0007669"/>
    <property type="project" value="Ensembl"/>
</dbReference>
<dbReference type="InterPro" id="IPR006043">
    <property type="entry name" value="NCS2"/>
</dbReference>
<dbReference type="InterPro" id="IPR006042">
    <property type="entry name" value="Xan_ur_permease"/>
</dbReference>
<dbReference type="PANTHER" id="PTHR11119">
    <property type="entry name" value="XANTHINE-URACIL / VITAMIN C PERMEASE FAMILY MEMBER"/>
    <property type="match status" value="1"/>
</dbReference>
<dbReference type="Pfam" id="PF00860">
    <property type="entry name" value="Xan_ur_permease"/>
    <property type="match status" value="1"/>
</dbReference>
<dbReference type="PROSITE" id="PS01116">
    <property type="entry name" value="XANTH_URACIL_PERMASE"/>
    <property type="match status" value="1"/>
</dbReference>
<proteinExistence type="evidence at protein level"/>
<name>S23A2_MOUSE</name>
<keyword id="KW-0025">Alternative splicing</keyword>
<keyword id="KW-0106">Calcium</keyword>
<keyword id="KW-0130">Cell adhesion</keyword>
<keyword id="KW-1003">Cell membrane</keyword>
<keyword id="KW-0325">Glycoprotein</keyword>
<keyword id="KW-0406">Ion transport</keyword>
<keyword id="KW-0472">Membrane</keyword>
<keyword id="KW-0597">Phosphoprotein</keyword>
<keyword id="KW-1185">Reference proteome</keyword>
<keyword id="KW-0677">Repeat</keyword>
<keyword id="KW-0915">Sodium</keyword>
<keyword id="KW-0739">Sodium transport</keyword>
<keyword id="KW-0769">Symport</keyword>
<keyword id="KW-0812">Transmembrane</keyword>
<keyword id="KW-1133">Transmembrane helix</keyword>
<keyword id="KW-0813">Transport</keyword>
<gene>
    <name type="primary">Slc23a2</name>
    <name evidence="6" type="synonym">Kiaa0238</name>
    <name type="synonym">Svct2</name>
    <name type="synonym">Yspl2</name>
</gene>
<sequence length="648" mass="70049">MMGIGKNTASKSVEAGGSTEGKYEEEAKHSNFFTLPVVINGGATSSGEQDNEDTELMAIYTTENGIAEKSSLAETLDSTGSLDPQRSDMIYTIEDVPPWYLCIFLGLQHYLTCFSGTIAVPFLLADAMCVGDDQWATSQLIGTIFFCVGITTLLQTTFGCRLPLFQASAFAFLAPARAILSLDKWKCNTTEITVANGTAELLEHIWHPRIQEIQGAIIMSSLIEVVIGLLGLPGALLRYIGPLTITPTVALIGLSGFQAAGERAGKHWGIAMLTIFLVLLFSQYARNVKFPLPIYKSKKGWTAYKFQLFKMFPIILAILVSWLLCFIFTVTDVFPSNSTDYGYYARTDARKGVLLVAPWFKVPYPFQWGMPTVSAAGVIGMLSAVVASIIESIGDYYACARLSCAPPPPIHAINRGIFVEGLSCVLDGIFGTGNGSTSSSPNIGVLGITKVGSRRVIQYGAALMLGLGMVGKFSALFASLPDPVLGALFCTLFGMITAVGLSNLQFIDLNSSRNLFVLGFSIFFGLVLPSYLRQNPLVTGITGIDQILNVLLTTAMFVGGCVAFILDNTIPGTPEERGIKKWKKGVSKGSKSLDGMESYNLPFGMNIIKKYRCFSYLPISPTFAGYTWKGFGKSENSRSSDKDSQATV</sequence>
<protein>
    <recommendedName>
        <fullName>Solute carrier family 23 member 2</fullName>
    </recommendedName>
    <alternativeName>
        <fullName>Na(+)/L-ascorbic acid transporter 2</fullName>
    </alternativeName>
    <alternativeName>
        <fullName>Sodium-dependent vitamin C transporter 2</fullName>
        <shortName>SVCT-2</shortName>
        <shortName>mSVCT2</shortName>
    </alternativeName>
    <alternativeName>
        <fullName>Yolk sac permease-like molecule 2</fullName>
    </alternativeName>
</protein>
<feature type="chain" id="PRO_0000165979" description="Solute carrier family 23 member 2">
    <location>
        <begin position="1"/>
        <end position="648"/>
    </location>
</feature>
<feature type="topological domain" description="Cytoplasmic" evidence="3">
    <location>
        <begin position="9"/>
        <end position="110"/>
    </location>
</feature>
<feature type="transmembrane region" description="Helical" evidence="3">
    <location>
        <begin position="111"/>
        <end position="131"/>
    </location>
</feature>
<feature type="topological domain" description="Extracellular" evidence="3">
    <location>
        <begin position="132"/>
        <end position="139"/>
    </location>
</feature>
<feature type="transmembrane region" description="Helical" evidence="3">
    <location>
        <begin position="140"/>
        <end position="160"/>
    </location>
</feature>
<feature type="topological domain" description="Cytoplasmic" evidence="3">
    <location>
        <position position="161"/>
    </location>
</feature>
<feature type="transmembrane region" description="Helical" evidence="3">
    <location>
        <begin position="162"/>
        <end position="182"/>
    </location>
</feature>
<feature type="topological domain" description="Extracellular" evidence="3">
    <location>
        <begin position="183"/>
        <end position="216"/>
    </location>
</feature>
<feature type="transmembrane region" description="Helical" evidence="3">
    <location>
        <begin position="217"/>
        <end position="237"/>
    </location>
</feature>
<feature type="topological domain" description="Cytoplasmic" evidence="3">
    <location>
        <begin position="238"/>
        <end position="264"/>
    </location>
</feature>
<feature type="transmembrane region" description="Helical" evidence="3">
    <location>
        <begin position="265"/>
        <end position="282"/>
    </location>
</feature>
<feature type="topological domain" description="Extracellular" evidence="3">
    <location>
        <begin position="283"/>
        <end position="286"/>
    </location>
</feature>
<feature type="intramembrane region" description="Helical" evidence="3">
    <location>
        <begin position="287"/>
        <end position="300"/>
    </location>
</feature>
<feature type="topological domain" description="Extracellular" evidence="3">
    <location>
        <begin position="301"/>
        <end position="307"/>
    </location>
</feature>
<feature type="transmembrane region" description="Helical" evidence="3">
    <location>
        <begin position="308"/>
        <end position="328"/>
    </location>
</feature>
<feature type="topological domain" description="Cytoplasmic" evidence="3">
    <location>
        <begin position="329"/>
        <end position="369"/>
    </location>
</feature>
<feature type="transmembrane region" description="Helical" evidence="3">
    <location>
        <begin position="370"/>
        <end position="390"/>
    </location>
</feature>
<feature type="topological domain" description="Extracellular" evidence="3">
    <location>
        <begin position="391"/>
        <end position="415"/>
    </location>
</feature>
<feature type="transmembrane region" description="Helical" evidence="3">
    <location>
        <begin position="416"/>
        <end position="436"/>
    </location>
</feature>
<feature type="topological domain" description="Cytoplasmic" evidence="3">
    <location>
        <begin position="437"/>
        <end position="459"/>
    </location>
</feature>
<feature type="transmembrane region" description="Helical" evidence="3">
    <location>
        <begin position="460"/>
        <end position="480"/>
    </location>
</feature>
<feature type="topological domain" description="Extracellular" evidence="3">
    <location>
        <begin position="481"/>
        <end position="483"/>
    </location>
</feature>
<feature type="transmembrane region" description="Helical" evidence="3">
    <location>
        <begin position="484"/>
        <end position="504"/>
    </location>
</feature>
<feature type="topological domain" description="Cytoplasmic" evidence="3">
    <location>
        <begin position="505"/>
        <end position="514"/>
    </location>
</feature>
<feature type="transmembrane region" description="Helical" evidence="3">
    <location>
        <begin position="515"/>
        <end position="535"/>
    </location>
</feature>
<feature type="topological domain" description="Extracellular" evidence="3">
    <location>
        <begin position="536"/>
        <end position="545"/>
    </location>
</feature>
<feature type="transmembrane region" description="Helical" evidence="3">
    <location>
        <begin position="546"/>
        <end position="566"/>
    </location>
</feature>
<feature type="topological domain" description="Cytoplasmic" evidence="3">
    <location>
        <begin position="567"/>
        <end position="648"/>
    </location>
</feature>
<feature type="region of interest" description="Disordered" evidence="4">
    <location>
        <begin position="1"/>
        <end position="21"/>
    </location>
</feature>
<feature type="modified residue" description="Phosphoserine" evidence="9">
    <location>
        <position position="70"/>
    </location>
</feature>
<feature type="modified residue" description="Phosphothreonine" evidence="2">
    <location>
        <position position="75"/>
    </location>
</feature>
<feature type="modified residue" description="Phosphoserine" evidence="9">
    <location>
        <position position="78"/>
    </location>
</feature>
<feature type="modified residue" description="Phosphothreonine" evidence="9">
    <location>
        <position position="79"/>
    </location>
</feature>
<feature type="modified residue" description="Phosphoserine" evidence="9 10">
    <location>
        <position position="81"/>
    </location>
</feature>
<feature type="modified residue" description="Phosphothreonine" evidence="9">
    <location>
        <position position="647"/>
    </location>
</feature>
<feature type="glycosylation site" description="N-linked (GlcNAc...) asparagine" evidence="3">
    <location>
        <position position="188"/>
    </location>
</feature>
<feature type="glycosylation site" description="N-linked (GlcNAc...) asparagine" evidence="3">
    <location>
        <position position="196"/>
    </location>
</feature>
<feature type="splice variant" id="VSP_007367" description="In isoform 2." evidence="7">
    <original>LPLFQASAFAFLAPARAILSLDKWKCNTTEITVANGTAELLEHIWHPRIQEIQGAIIMSSLIEVVIGLLGLPGALLRYIGPLTITPTVALIGLSGFQAAGERAGKHWGIAM</original>
    <variation>DYSCQWNGRAVGTHLASPNPRDPGGYHHVLTDRSGHWPPWPAWGSAEVYWTLDHHTHRGPHWPLWFPGSRRESRKALGHCHAVSVLRELQGWGTIFTTMWDSLVEYLKQSH</variation>
    <location>
        <begin position="162"/>
        <end position="272"/>
    </location>
</feature>
<feature type="splice variant" id="VSP_007368" description="In isoform 2." evidence="7">
    <location>
        <begin position="273"/>
        <end position="648"/>
    </location>
</feature>